<organism>
    <name type="scientific">Debaryomyces hansenii (strain ATCC 36239 / CBS 767 / BCRC 21394 / JCM 1990 / NBRC 0083 / IGC 2968)</name>
    <name type="common">Yeast</name>
    <name type="synonym">Torulaspora hansenii</name>
    <dbReference type="NCBI Taxonomy" id="284592"/>
    <lineage>
        <taxon>Eukaryota</taxon>
        <taxon>Fungi</taxon>
        <taxon>Dikarya</taxon>
        <taxon>Ascomycota</taxon>
        <taxon>Saccharomycotina</taxon>
        <taxon>Pichiomycetes</taxon>
        <taxon>Debaryomycetaceae</taxon>
        <taxon>Debaryomyces</taxon>
    </lineage>
</organism>
<feature type="chain" id="PRO_0000165653" description="RuvB-like helicase 1">
    <location>
        <begin position="1"/>
        <end position="457"/>
    </location>
</feature>
<feature type="binding site" evidence="1">
    <location>
        <begin position="72"/>
        <end position="79"/>
    </location>
    <ligand>
        <name>ATP</name>
        <dbReference type="ChEBI" id="CHEBI:30616"/>
    </ligand>
</feature>
<dbReference type="EC" id="3.6.4.12"/>
<dbReference type="EMBL" id="CR382139">
    <property type="protein sequence ID" value="CAG90597.1"/>
    <property type="molecule type" value="Genomic_DNA"/>
</dbReference>
<dbReference type="RefSeq" id="XP_462111.1">
    <property type="nucleotide sequence ID" value="XM_462111.1"/>
</dbReference>
<dbReference type="SMR" id="Q6BI60"/>
<dbReference type="FunCoup" id="Q6BI60">
    <property type="interactions" value="1635"/>
</dbReference>
<dbReference type="STRING" id="284592.Q6BI60"/>
<dbReference type="GeneID" id="2905025"/>
<dbReference type="KEGG" id="dha:DEHA2G13200g"/>
<dbReference type="VEuPathDB" id="FungiDB:DEHA2G13200g"/>
<dbReference type="eggNOG" id="KOG1942">
    <property type="taxonomic scope" value="Eukaryota"/>
</dbReference>
<dbReference type="HOGENOM" id="CLU_028311_1_1_1"/>
<dbReference type="InParanoid" id="Q6BI60"/>
<dbReference type="OMA" id="RTLPYNK"/>
<dbReference type="OrthoDB" id="10060499at2759"/>
<dbReference type="Proteomes" id="UP000000599">
    <property type="component" value="Chromosome G"/>
</dbReference>
<dbReference type="GO" id="GO:0031011">
    <property type="term" value="C:Ino80 complex"/>
    <property type="evidence" value="ECO:0007669"/>
    <property type="project" value="EnsemblFungi"/>
</dbReference>
<dbReference type="GO" id="GO:0097255">
    <property type="term" value="C:R2TP complex"/>
    <property type="evidence" value="ECO:0007669"/>
    <property type="project" value="EnsemblFungi"/>
</dbReference>
<dbReference type="GO" id="GO:0000812">
    <property type="term" value="C:Swr1 complex"/>
    <property type="evidence" value="ECO:0007669"/>
    <property type="project" value="EnsemblFungi"/>
</dbReference>
<dbReference type="GO" id="GO:0043138">
    <property type="term" value="F:3'-5' DNA helicase activity"/>
    <property type="evidence" value="ECO:0007669"/>
    <property type="project" value="EnsemblFungi"/>
</dbReference>
<dbReference type="GO" id="GO:0043139">
    <property type="term" value="F:5'-3' DNA helicase activity"/>
    <property type="evidence" value="ECO:0007669"/>
    <property type="project" value="EnsemblFungi"/>
</dbReference>
<dbReference type="GO" id="GO:0005524">
    <property type="term" value="F:ATP binding"/>
    <property type="evidence" value="ECO:0007669"/>
    <property type="project" value="UniProtKB-KW"/>
</dbReference>
<dbReference type="GO" id="GO:0016887">
    <property type="term" value="F:ATP hydrolysis activity"/>
    <property type="evidence" value="ECO:0007669"/>
    <property type="project" value="InterPro"/>
</dbReference>
<dbReference type="GO" id="GO:0000492">
    <property type="term" value="P:box C/D snoRNP assembly"/>
    <property type="evidence" value="ECO:0007669"/>
    <property type="project" value="EnsemblFungi"/>
</dbReference>
<dbReference type="GO" id="GO:0006338">
    <property type="term" value="P:chromatin remodeling"/>
    <property type="evidence" value="ECO:0007669"/>
    <property type="project" value="EnsemblFungi"/>
</dbReference>
<dbReference type="GO" id="GO:0006281">
    <property type="term" value="P:DNA repair"/>
    <property type="evidence" value="ECO:0007669"/>
    <property type="project" value="UniProtKB-KW"/>
</dbReference>
<dbReference type="GO" id="GO:0006357">
    <property type="term" value="P:regulation of transcription by RNA polymerase II"/>
    <property type="evidence" value="ECO:0007669"/>
    <property type="project" value="EnsemblFungi"/>
</dbReference>
<dbReference type="FunFam" id="1.10.8.60:FF:000010">
    <property type="entry name" value="RuvB-like helicase"/>
    <property type="match status" value="1"/>
</dbReference>
<dbReference type="FunFam" id="2.40.50.360:FF:000001">
    <property type="entry name" value="RuvB-like helicase"/>
    <property type="match status" value="1"/>
</dbReference>
<dbReference type="Gene3D" id="1.10.8.60">
    <property type="match status" value="1"/>
</dbReference>
<dbReference type="Gene3D" id="3.40.50.300">
    <property type="entry name" value="P-loop containing nucleotide triphosphate hydrolases"/>
    <property type="match status" value="1"/>
</dbReference>
<dbReference type="Gene3D" id="2.40.50.360">
    <property type="entry name" value="RuvB-like helicase, domain II"/>
    <property type="match status" value="1"/>
</dbReference>
<dbReference type="InterPro" id="IPR003593">
    <property type="entry name" value="AAA+_ATPase"/>
</dbReference>
<dbReference type="InterPro" id="IPR027417">
    <property type="entry name" value="P-loop_NTPase"/>
</dbReference>
<dbReference type="InterPro" id="IPR027238">
    <property type="entry name" value="RuvB-like"/>
</dbReference>
<dbReference type="InterPro" id="IPR041048">
    <property type="entry name" value="RuvB-like_C"/>
</dbReference>
<dbReference type="InterPro" id="IPR042487">
    <property type="entry name" value="RuvBL1/2_DNA/RNA_bd_dom"/>
</dbReference>
<dbReference type="InterPro" id="IPR010339">
    <property type="entry name" value="TIP49_P-loop"/>
</dbReference>
<dbReference type="PANTHER" id="PTHR11093">
    <property type="entry name" value="RUVB-RELATED REPTIN AND PONTIN"/>
    <property type="match status" value="1"/>
</dbReference>
<dbReference type="Pfam" id="PF06068">
    <property type="entry name" value="TIP49"/>
    <property type="match status" value="1"/>
</dbReference>
<dbReference type="Pfam" id="PF17856">
    <property type="entry name" value="TIP49_C"/>
    <property type="match status" value="1"/>
</dbReference>
<dbReference type="SMART" id="SM00382">
    <property type="entry name" value="AAA"/>
    <property type="match status" value="1"/>
</dbReference>
<dbReference type="SUPFAM" id="SSF52540">
    <property type="entry name" value="P-loop containing nucleoside triphosphate hydrolases"/>
    <property type="match status" value="1"/>
</dbReference>
<keyword id="KW-0010">Activator</keyword>
<keyword id="KW-0067">ATP-binding</keyword>
<keyword id="KW-0156">Chromatin regulator</keyword>
<keyword id="KW-0227">DNA damage</keyword>
<keyword id="KW-0234">DNA repair</keyword>
<keyword id="KW-0347">Helicase</keyword>
<keyword id="KW-0378">Hydrolase</keyword>
<keyword id="KW-0547">Nucleotide-binding</keyword>
<keyword id="KW-0539">Nucleus</keyword>
<keyword id="KW-1185">Reference proteome</keyword>
<keyword id="KW-0804">Transcription</keyword>
<keyword id="KW-0805">Transcription regulation</keyword>
<accession>Q6BI60</accession>
<proteinExistence type="inferred from homology"/>
<name>RUVB1_DEBHA</name>
<reference key="1">
    <citation type="journal article" date="2004" name="Nature">
        <title>Genome evolution in yeasts.</title>
        <authorList>
            <person name="Dujon B."/>
            <person name="Sherman D."/>
            <person name="Fischer G."/>
            <person name="Durrens P."/>
            <person name="Casaregola S."/>
            <person name="Lafontaine I."/>
            <person name="de Montigny J."/>
            <person name="Marck C."/>
            <person name="Neuveglise C."/>
            <person name="Talla E."/>
            <person name="Goffard N."/>
            <person name="Frangeul L."/>
            <person name="Aigle M."/>
            <person name="Anthouard V."/>
            <person name="Babour A."/>
            <person name="Barbe V."/>
            <person name="Barnay S."/>
            <person name="Blanchin S."/>
            <person name="Beckerich J.-M."/>
            <person name="Beyne E."/>
            <person name="Bleykasten C."/>
            <person name="Boisrame A."/>
            <person name="Boyer J."/>
            <person name="Cattolico L."/>
            <person name="Confanioleri F."/>
            <person name="de Daruvar A."/>
            <person name="Despons L."/>
            <person name="Fabre E."/>
            <person name="Fairhead C."/>
            <person name="Ferry-Dumazet H."/>
            <person name="Groppi A."/>
            <person name="Hantraye F."/>
            <person name="Hennequin C."/>
            <person name="Jauniaux N."/>
            <person name="Joyet P."/>
            <person name="Kachouri R."/>
            <person name="Kerrest A."/>
            <person name="Koszul R."/>
            <person name="Lemaire M."/>
            <person name="Lesur I."/>
            <person name="Ma L."/>
            <person name="Muller H."/>
            <person name="Nicaud J.-M."/>
            <person name="Nikolski M."/>
            <person name="Oztas S."/>
            <person name="Ozier-Kalogeropoulos O."/>
            <person name="Pellenz S."/>
            <person name="Potier S."/>
            <person name="Richard G.-F."/>
            <person name="Straub M.-L."/>
            <person name="Suleau A."/>
            <person name="Swennen D."/>
            <person name="Tekaia F."/>
            <person name="Wesolowski-Louvel M."/>
            <person name="Westhof E."/>
            <person name="Wirth B."/>
            <person name="Zeniou-Meyer M."/>
            <person name="Zivanovic Y."/>
            <person name="Bolotin-Fukuhara M."/>
            <person name="Thierry A."/>
            <person name="Bouchier C."/>
            <person name="Caudron B."/>
            <person name="Scarpelli C."/>
            <person name="Gaillardin C."/>
            <person name="Weissenbach J."/>
            <person name="Wincker P."/>
            <person name="Souciet J.-L."/>
        </authorList>
    </citation>
    <scope>NUCLEOTIDE SEQUENCE [LARGE SCALE GENOMIC DNA]</scope>
    <source>
        <strain>ATCC 36239 / CBS 767 / BCRC 21394 / JCM 1990 / NBRC 0083 / IGC 2968</strain>
    </source>
</reference>
<protein>
    <recommendedName>
        <fullName>RuvB-like helicase 1</fullName>
        <ecNumber>3.6.4.12</ecNumber>
    </recommendedName>
</protein>
<sequence>MVQINEVKDTQTRESRTAAHTHIKGLGLDEHGIAKRVEGGFVGQSDAREACGIIVDLIKSKRMSGKAILLAGAPGTGKTALALAISQELGPKVPFCPIVGSELFSAEIKKTAALMENFRRAIGLRIKETKEVYEGEVIELTPEEAENPLGGYGKTISHVIVGLKTAKGTKSLRLDPSIYESIQKERVSVGDVIYIEANTGSVKRVGRSDAYATEFDLEAEEYVPLPKGEVHKKKEIVQDVTLHDLDVANARPQGGQDVLSMMGQLLKPRKTEITDKLRSEVNKVVSKYIDQGVAELIPGVLFIDEVNMLDIECFTYLNRALESSIAPIVVLASNRGMTTIRGTDDDKKSPHGCPADLIDRLLIVRTLPYNQEEIKIIISKRATLENLIVTPDALDKLSLHGINNSLRYALQLLAPAGVLSKTAGRNEITSEDIEECEILFLDSRRSIKILEETKGYL</sequence>
<evidence type="ECO:0000250" key="1"/>
<evidence type="ECO:0000305" key="2"/>
<gene>
    <name type="primary">RBV1</name>
    <name type="ordered locus">DEHA2G13200g</name>
</gene>
<comment type="function">
    <text evidence="1">DNA helicase which participates in several chromatin remodeling complexes, including the SWR1 and the INO80 complexes. The SWR1 complex mediates the ATP-dependent exchange of histone H2A for the H2A variant HZT1 leading to transcriptional regulation of selected genes by chromatin remodeling. The INO80 complex remodels chromatin by shifting nucleosomes and is involved in DNA repair. Also involved in pre-rRNA processing (By similarity).</text>
</comment>
<comment type="catalytic activity">
    <reaction>
        <text>ATP + H2O = ADP + phosphate + H(+)</text>
        <dbReference type="Rhea" id="RHEA:13065"/>
        <dbReference type="ChEBI" id="CHEBI:15377"/>
        <dbReference type="ChEBI" id="CHEBI:15378"/>
        <dbReference type="ChEBI" id="CHEBI:30616"/>
        <dbReference type="ChEBI" id="CHEBI:43474"/>
        <dbReference type="ChEBI" id="CHEBI:456216"/>
        <dbReference type="EC" id="3.6.4.12"/>
    </reaction>
</comment>
<comment type="subunit">
    <text evidence="1">May form heterododecamers with RVB2. Component of the SWR1 chromatin remodeling complex, the INO80 chromatin remodeling complex, and of the R2TP complex (By similarity).</text>
</comment>
<comment type="subcellular location">
    <subcellularLocation>
        <location evidence="1">Nucleus</location>
    </subcellularLocation>
</comment>
<comment type="similarity">
    <text evidence="2">Belongs to the RuvB family.</text>
</comment>